<sequence length="188" mass="21181">MDCRKMVRFSYSVIWIMAISKAFELGLVAGLGHQEFARPSRGDLAFRDDSIWPQEEPAIRPRSSQRVLPMGIQHSKELNRTCCLNGGTCMLESFCACPPSFYGRNCEHDVRKENCGSVPHDTWLPKKCSLCKCWHGQLRCFPQAFLPGCDGLVMDEHLVASRTPELPPSARTTTFMLAGICLSIQSYY</sequence>
<comment type="function">
    <text evidence="3">Could play a role in the determination of the epiblastic cells that subsequently give rise to the mesoderm. Activates the Nodal-dependent signaling pathway.</text>
</comment>
<comment type="subcellular location">
    <subcellularLocation>
        <location evidence="3">Cell membrane</location>
        <topology evidence="5">Peripheral membrane protein</topology>
    </subcellularLocation>
</comment>
<comment type="tissue specificity">
    <text evidence="3">Expressed weakly in lung, colon and breast. Expressed also strongly in primary cancer tissues; lung and colon cancers.</text>
</comment>
<comment type="similarity">
    <text evidence="5">Belongs to the EGF-CFC (Cripto-1/FRL1/Cryptic) family.</text>
</comment>
<proteinExistence type="evidence at transcript level"/>
<gene>
    <name evidence="4 6" type="primary">CRIPTO3</name>
    <name type="synonym">CRIPTO-3</name>
    <name type="synonym">TDGF1P3</name>
    <name type="synonym">TDGF2</name>
    <name type="synonym">TDGF3</name>
</gene>
<evidence type="ECO:0000250" key="1">
    <source>
        <dbReference type="UniProtKB" id="P13385"/>
    </source>
</evidence>
<evidence type="ECO:0000255" key="2"/>
<evidence type="ECO:0000269" key="3">
    <source>
    </source>
</evidence>
<evidence type="ECO:0000303" key="4">
    <source>
    </source>
</evidence>
<evidence type="ECO:0000305" key="5"/>
<evidence type="ECO:0000312" key="6">
    <source>
        <dbReference type="HGNC" id="HGNC:11703"/>
    </source>
</evidence>
<dbReference type="EMBL" id="M96956">
    <property type="protein sequence ID" value="AAA61135.1"/>
    <property type="molecule type" value="mRNA"/>
</dbReference>
<dbReference type="EMBL" id="AF251549">
    <property type="protein sequence ID" value="AAG49538.1"/>
    <property type="molecule type" value="Genomic_DNA"/>
</dbReference>
<dbReference type="EMBL" id="AF251550">
    <property type="protein sequence ID" value="AAG49539.1"/>
    <property type="molecule type" value="Genomic_DNA"/>
</dbReference>
<dbReference type="EMBL" id="AC000113">
    <property type="protein sequence ID" value="AAB46353.1"/>
    <property type="molecule type" value="Genomic_DNA"/>
</dbReference>
<dbReference type="CCDS" id="CCDS94651.1"/>
<dbReference type="RefSeq" id="NP_001384291.1">
    <property type="nucleotide sequence ID" value="NM_001397362.1"/>
</dbReference>
<dbReference type="SMR" id="P51864"/>
<dbReference type="FunCoup" id="P51864">
    <property type="interactions" value="44"/>
</dbReference>
<dbReference type="GlyCosmos" id="P51864">
    <property type="glycosylation" value="1 site, No reported glycans"/>
</dbReference>
<dbReference type="GlyGen" id="P51864">
    <property type="glycosylation" value="1 site"/>
</dbReference>
<dbReference type="BioMuta" id="HGNC:11703"/>
<dbReference type="DMDM" id="1706127"/>
<dbReference type="jPOST" id="P51864"/>
<dbReference type="MassIVE" id="P51864"/>
<dbReference type="PeptideAtlas" id="P51864"/>
<dbReference type="ProteomicsDB" id="56441"/>
<dbReference type="Ensembl" id="ENST00000602699.2">
    <property type="protein sequence ID" value="ENSP00000507999.1"/>
    <property type="gene ID" value="ENSG00000225366.6"/>
</dbReference>
<dbReference type="GeneID" id="6998"/>
<dbReference type="MANE-Select" id="ENST00000602699.2">
    <property type="protein sequence ID" value="ENSP00000507999.1"/>
    <property type="RefSeq nucleotide sequence ID" value="NM_001397362.1"/>
    <property type="RefSeq protein sequence ID" value="NP_001384291.1"/>
</dbReference>
<dbReference type="AGR" id="HGNC:11703"/>
<dbReference type="GeneCards" id="CRIPTO3"/>
<dbReference type="HGNC" id="HGNC:11703">
    <property type="gene designation" value="CRIPTO3"/>
</dbReference>
<dbReference type="HPA" id="ENSG00000225366">
    <property type="expression patterns" value="Not detected"/>
</dbReference>
<dbReference type="neXtProt" id="NX_P51864"/>
<dbReference type="OpenTargets" id="ENSG00000225366"/>
<dbReference type="GeneTree" id="ENSGT00940000159076"/>
<dbReference type="InParanoid" id="P51864"/>
<dbReference type="OrthoDB" id="9893603at2759"/>
<dbReference type="PAN-GO" id="P51864">
    <property type="GO annotations" value="9 GO annotations based on evolutionary models"/>
</dbReference>
<dbReference type="PathwayCommons" id="P51864"/>
<dbReference type="Reactome" id="R-HSA-1181150">
    <property type="pathway name" value="Signaling by NODAL"/>
</dbReference>
<dbReference type="Reactome" id="R-HSA-1433617">
    <property type="pathway name" value="Regulation of signaling by NODAL"/>
</dbReference>
<dbReference type="SignaLink" id="P51864"/>
<dbReference type="ChiTaRS" id="TDGF1P3">
    <property type="organism name" value="human"/>
</dbReference>
<dbReference type="Pharos" id="P51864">
    <property type="development level" value="Tdark"/>
</dbReference>
<dbReference type="PRO" id="PR:P51864"/>
<dbReference type="Proteomes" id="UP000005640">
    <property type="component" value="Chromosome X"/>
</dbReference>
<dbReference type="RNAct" id="P51864">
    <property type="molecule type" value="protein"/>
</dbReference>
<dbReference type="Bgee" id="ENSG00000225366">
    <property type="expression patterns" value="Expressed in male germ line stem cell (sensu Vertebrata) in testis and 14 other cell types or tissues"/>
</dbReference>
<dbReference type="GO" id="GO:0009986">
    <property type="term" value="C:cell surface"/>
    <property type="evidence" value="ECO:0000318"/>
    <property type="project" value="GO_Central"/>
</dbReference>
<dbReference type="GO" id="GO:0005576">
    <property type="term" value="C:extracellular region"/>
    <property type="evidence" value="ECO:0000318"/>
    <property type="project" value="GO_Central"/>
</dbReference>
<dbReference type="GO" id="GO:0005886">
    <property type="term" value="C:plasma membrane"/>
    <property type="evidence" value="ECO:0000314"/>
    <property type="project" value="UniProtKB"/>
</dbReference>
<dbReference type="GO" id="GO:0070697">
    <property type="term" value="F:activin receptor binding"/>
    <property type="evidence" value="ECO:0000318"/>
    <property type="project" value="GO_Central"/>
</dbReference>
<dbReference type="GO" id="GO:0008083">
    <property type="term" value="F:growth factor activity"/>
    <property type="evidence" value="ECO:0000303"/>
    <property type="project" value="UniProtKB"/>
</dbReference>
<dbReference type="GO" id="GO:0038100">
    <property type="term" value="F:nodal binding"/>
    <property type="evidence" value="ECO:0000318"/>
    <property type="project" value="GO_Central"/>
</dbReference>
<dbReference type="GO" id="GO:0009952">
    <property type="term" value="P:anterior/posterior pattern specification"/>
    <property type="evidence" value="ECO:0000318"/>
    <property type="project" value="GO_Central"/>
</dbReference>
<dbReference type="GO" id="GO:0001568">
    <property type="term" value="P:blood vessel development"/>
    <property type="evidence" value="ECO:0000318"/>
    <property type="project" value="GO_Central"/>
</dbReference>
<dbReference type="GO" id="GO:0007368">
    <property type="term" value="P:determination of left/right symmetry"/>
    <property type="evidence" value="ECO:0000318"/>
    <property type="project" value="GO_Central"/>
</dbReference>
<dbReference type="GO" id="GO:0007507">
    <property type="term" value="P:heart development"/>
    <property type="evidence" value="ECO:0000318"/>
    <property type="project" value="GO_Central"/>
</dbReference>
<dbReference type="GO" id="GO:0038092">
    <property type="term" value="P:nodal signaling pathway"/>
    <property type="evidence" value="ECO:0000318"/>
    <property type="project" value="GO_Central"/>
</dbReference>
<dbReference type="GO" id="GO:0007165">
    <property type="term" value="P:signal transduction"/>
    <property type="evidence" value="ECO:0000314"/>
    <property type="project" value="UniProtKB"/>
</dbReference>
<dbReference type="CDD" id="cd00054">
    <property type="entry name" value="EGF_CA"/>
    <property type="match status" value="1"/>
</dbReference>
<dbReference type="FunFam" id="2.10.25.10:FF:000421">
    <property type="entry name" value="Teratocarcinoma-derived growth factor"/>
    <property type="match status" value="1"/>
</dbReference>
<dbReference type="Gene3D" id="2.10.25.10">
    <property type="entry name" value="Laminin"/>
    <property type="match status" value="1"/>
</dbReference>
<dbReference type="InterPro" id="IPR017047">
    <property type="entry name" value="Cripto_growth_factor"/>
</dbReference>
<dbReference type="InterPro" id="IPR019011">
    <property type="entry name" value="Cryptic/Cripto_CFC-dom"/>
</dbReference>
<dbReference type="InterPro" id="IPR000742">
    <property type="entry name" value="EGF-like_dom"/>
</dbReference>
<dbReference type="Pfam" id="PF09443">
    <property type="entry name" value="CFC"/>
    <property type="match status" value="1"/>
</dbReference>
<dbReference type="PIRSF" id="PIRSF036301">
    <property type="entry name" value="Cripto_growth_factor"/>
    <property type="match status" value="1"/>
</dbReference>
<dbReference type="SUPFAM" id="SSF57196">
    <property type="entry name" value="EGF/Laminin"/>
    <property type="match status" value="2"/>
</dbReference>
<dbReference type="PROSITE" id="PS00022">
    <property type="entry name" value="EGF_1"/>
    <property type="match status" value="1"/>
</dbReference>
<accession>P51864</accession>
<keyword id="KW-1003">Cell membrane</keyword>
<keyword id="KW-1015">Disulfide bond</keyword>
<keyword id="KW-0245">EGF-like domain</keyword>
<keyword id="KW-0325">Glycoprotein</keyword>
<keyword id="KW-0339">Growth factor</keyword>
<keyword id="KW-0472">Membrane</keyword>
<keyword id="KW-1185">Reference proteome</keyword>
<name>TDGF3_HUMAN</name>
<feature type="chain" id="PRO_0000055627" description="Protein CRIPTO3">
    <location>
        <begin position="1"/>
        <end position="188"/>
    </location>
</feature>
<feature type="domain" description="EGF-like">
    <location>
        <begin position="78"/>
        <end position="107"/>
    </location>
</feature>
<feature type="glycosylation site" description="N-linked (GlcNAc...) asparagine" evidence="2">
    <location>
        <position position="79"/>
    </location>
</feature>
<feature type="disulfide bond" evidence="1">
    <location>
        <begin position="82"/>
        <end position="89"/>
    </location>
</feature>
<feature type="disulfide bond" evidence="1">
    <location>
        <begin position="83"/>
        <end position="95"/>
    </location>
</feature>
<feature type="disulfide bond" evidence="1">
    <location>
        <begin position="97"/>
        <end position="106"/>
    </location>
</feature>
<feature type="disulfide bond" evidence="1">
    <location>
        <begin position="115"/>
        <end position="133"/>
    </location>
</feature>
<feature type="disulfide bond" evidence="1">
    <location>
        <begin position="128"/>
        <end position="149"/>
    </location>
</feature>
<feature type="disulfide bond" evidence="1">
    <location>
        <begin position="131"/>
        <end position="140"/>
    </location>
</feature>
<organism>
    <name type="scientific">Homo sapiens</name>
    <name type="common">Human</name>
    <dbReference type="NCBI Taxonomy" id="9606"/>
    <lineage>
        <taxon>Eukaryota</taxon>
        <taxon>Metazoa</taxon>
        <taxon>Chordata</taxon>
        <taxon>Craniata</taxon>
        <taxon>Vertebrata</taxon>
        <taxon>Euteleostomi</taxon>
        <taxon>Mammalia</taxon>
        <taxon>Eutheria</taxon>
        <taxon>Euarchontoglires</taxon>
        <taxon>Primates</taxon>
        <taxon>Haplorrhini</taxon>
        <taxon>Catarrhini</taxon>
        <taxon>Hominidae</taxon>
        <taxon>Homo</taxon>
    </lineage>
</organism>
<protein>
    <recommendedName>
        <fullName evidence="5">Protein CRIPTO3</fullName>
    </recommendedName>
    <alternativeName>
        <fullName>Cripto, EGF-CFC family member 3</fullName>
    </alternativeName>
    <alternativeName>
        <fullName>Cripto-3 growth factor</fullName>
    </alternativeName>
    <alternativeName>
        <fullName>Epidermal growth factor-like cripto protein CR3</fullName>
    </alternativeName>
    <alternativeName>
        <fullName>Teratocarcinoma-derived growth factor 1 pseudogene 3</fullName>
    </alternativeName>
    <alternativeName>
        <fullName>Teratocarcinoma-derived growth factor 3</fullName>
    </alternativeName>
</protein>
<reference key="1">
    <citation type="journal article" date="1991" name="Am. J. Hum. Genet.">
        <title>Isolation and characterization of the CRIPTO autosomal gene and its X-linked related sequence.</title>
        <authorList>
            <person name="Dono R."/>
            <person name="Montuori N."/>
            <person name="Rocchi M."/>
            <person name="de Ponti-Zilli L."/>
            <person name="Ciccodicola A."/>
            <person name="Persico M.G."/>
        </authorList>
    </citation>
    <scope>NUCLEOTIDE SEQUENCE [MRNA]</scope>
    <source>
        <tissue>Lung fibroblast</tissue>
    </source>
</reference>
<reference key="2">
    <citation type="submission" date="2000-04" db="EMBL/GenBank/DDBJ databases">
        <title>Cripto-3 and Cripto-1 have different effects on the growth characteristics of MCF-7 and Vero cells.</title>
        <authorList>
            <person name="Kintner M.A."/>
            <person name="Kintner R.L."/>
            <person name="Hosick H.L."/>
        </authorList>
    </citation>
    <scope>NUCLEOTIDE SEQUENCE [GENOMIC DNA]</scope>
</reference>
<reference key="3">
    <citation type="journal article" date="2005" name="Nature">
        <title>The DNA sequence of the human X chromosome.</title>
        <authorList>
            <person name="Ross M.T."/>
            <person name="Grafham D.V."/>
            <person name="Coffey A.J."/>
            <person name="Scherer S."/>
            <person name="McLay K."/>
            <person name="Muzny D."/>
            <person name="Platzer M."/>
            <person name="Howell G.R."/>
            <person name="Burrows C."/>
            <person name="Bird C.P."/>
            <person name="Frankish A."/>
            <person name="Lovell F.L."/>
            <person name="Howe K.L."/>
            <person name="Ashurst J.L."/>
            <person name="Fulton R.S."/>
            <person name="Sudbrak R."/>
            <person name="Wen G."/>
            <person name="Jones M.C."/>
            <person name="Hurles M.E."/>
            <person name="Andrews T.D."/>
            <person name="Scott C.E."/>
            <person name="Searle S."/>
            <person name="Ramser J."/>
            <person name="Whittaker A."/>
            <person name="Deadman R."/>
            <person name="Carter N.P."/>
            <person name="Hunt S.E."/>
            <person name="Chen R."/>
            <person name="Cree A."/>
            <person name="Gunaratne P."/>
            <person name="Havlak P."/>
            <person name="Hodgson A."/>
            <person name="Metzker M.L."/>
            <person name="Richards S."/>
            <person name="Scott G."/>
            <person name="Steffen D."/>
            <person name="Sodergren E."/>
            <person name="Wheeler D.A."/>
            <person name="Worley K.C."/>
            <person name="Ainscough R."/>
            <person name="Ambrose K.D."/>
            <person name="Ansari-Lari M.A."/>
            <person name="Aradhya S."/>
            <person name="Ashwell R.I."/>
            <person name="Babbage A.K."/>
            <person name="Bagguley C.L."/>
            <person name="Ballabio A."/>
            <person name="Banerjee R."/>
            <person name="Barker G.E."/>
            <person name="Barlow K.F."/>
            <person name="Barrett I.P."/>
            <person name="Bates K.N."/>
            <person name="Beare D.M."/>
            <person name="Beasley H."/>
            <person name="Beasley O."/>
            <person name="Beck A."/>
            <person name="Bethel G."/>
            <person name="Blechschmidt K."/>
            <person name="Brady N."/>
            <person name="Bray-Allen S."/>
            <person name="Bridgeman A.M."/>
            <person name="Brown A.J."/>
            <person name="Brown M.J."/>
            <person name="Bonnin D."/>
            <person name="Bruford E.A."/>
            <person name="Buhay C."/>
            <person name="Burch P."/>
            <person name="Burford D."/>
            <person name="Burgess J."/>
            <person name="Burrill W."/>
            <person name="Burton J."/>
            <person name="Bye J.M."/>
            <person name="Carder C."/>
            <person name="Carrel L."/>
            <person name="Chako J."/>
            <person name="Chapman J.C."/>
            <person name="Chavez D."/>
            <person name="Chen E."/>
            <person name="Chen G."/>
            <person name="Chen Y."/>
            <person name="Chen Z."/>
            <person name="Chinault C."/>
            <person name="Ciccodicola A."/>
            <person name="Clark S.Y."/>
            <person name="Clarke G."/>
            <person name="Clee C.M."/>
            <person name="Clegg S."/>
            <person name="Clerc-Blankenburg K."/>
            <person name="Clifford K."/>
            <person name="Cobley V."/>
            <person name="Cole C.G."/>
            <person name="Conquer J.S."/>
            <person name="Corby N."/>
            <person name="Connor R.E."/>
            <person name="David R."/>
            <person name="Davies J."/>
            <person name="Davis C."/>
            <person name="Davis J."/>
            <person name="Delgado O."/>
            <person name="Deshazo D."/>
            <person name="Dhami P."/>
            <person name="Ding Y."/>
            <person name="Dinh H."/>
            <person name="Dodsworth S."/>
            <person name="Draper H."/>
            <person name="Dugan-Rocha S."/>
            <person name="Dunham A."/>
            <person name="Dunn M."/>
            <person name="Durbin K.J."/>
            <person name="Dutta I."/>
            <person name="Eades T."/>
            <person name="Ellwood M."/>
            <person name="Emery-Cohen A."/>
            <person name="Errington H."/>
            <person name="Evans K.L."/>
            <person name="Faulkner L."/>
            <person name="Francis F."/>
            <person name="Frankland J."/>
            <person name="Fraser A.E."/>
            <person name="Galgoczy P."/>
            <person name="Gilbert J."/>
            <person name="Gill R."/>
            <person name="Gloeckner G."/>
            <person name="Gregory S.G."/>
            <person name="Gribble S."/>
            <person name="Griffiths C."/>
            <person name="Grocock R."/>
            <person name="Gu Y."/>
            <person name="Gwilliam R."/>
            <person name="Hamilton C."/>
            <person name="Hart E.A."/>
            <person name="Hawes A."/>
            <person name="Heath P.D."/>
            <person name="Heitmann K."/>
            <person name="Hennig S."/>
            <person name="Hernandez J."/>
            <person name="Hinzmann B."/>
            <person name="Ho S."/>
            <person name="Hoffs M."/>
            <person name="Howden P.J."/>
            <person name="Huckle E.J."/>
            <person name="Hume J."/>
            <person name="Hunt P.J."/>
            <person name="Hunt A.R."/>
            <person name="Isherwood J."/>
            <person name="Jacob L."/>
            <person name="Johnson D."/>
            <person name="Jones S."/>
            <person name="de Jong P.J."/>
            <person name="Joseph S.S."/>
            <person name="Keenan S."/>
            <person name="Kelly S."/>
            <person name="Kershaw J.K."/>
            <person name="Khan Z."/>
            <person name="Kioschis P."/>
            <person name="Klages S."/>
            <person name="Knights A.J."/>
            <person name="Kosiura A."/>
            <person name="Kovar-Smith C."/>
            <person name="Laird G.K."/>
            <person name="Langford C."/>
            <person name="Lawlor S."/>
            <person name="Leversha M."/>
            <person name="Lewis L."/>
            <person name="Liu W."/>
            <person name="Lloyd C."/>
            <person name="Lloyd D.M."/>
            <person name="Loulseged H."/>
            <person name="Loveland J.E."/>
            <person name="Lovell J.D."/>
            <person name="Lozado R."/>
            <person name="Lu J."/>
            <person name="Lyne R."/>
            <person name="Ma J."/>
            <person name="Maheshwari M."/>
            <person name="Matthews L.H."/>
            <person name="McDowall J."/>
            <person name="McLaren S."/>
            <person name="McMurray A."/>
            <person name="Meidl P."/>
            <person name="Meitinger T."/>
            <person name="Milne S."/>
            <person name="Miner G."/>
            <person name="Mistry S.L."/>
            <person name="Morgan M."/>
            <person name="Morris S."/>
            <person name="Mueller I."/>
            <person name="Mullikin J.C."/>
            <person name="Nguyen N."/>
            <person name="Nordsiek G."/>
            <person name="Nyakatura G."/>
            <person name="O'dell C.N."/>
            <person name="Okwuonu G."/>
            <person name="Palmer S."/>
            <person name="Pandian R."/>
            <person name="Parker D."/>
            <person name="Parrish J."/>
            <person name="Pasternak S."/>
            <person name="Patel D."/>
            <person name="Pearce A.V."/>
            <person name="Pearson D.M."/>
            <person name="Pelan S.E."/>
            <person name="Perez L."/>
            <person name="Porter K.M."/>
            <person name="Ramsey Y."/>
            <person name="Reichwald K."/>
            <person name="Rhodes S."/>
            <person name="Ridler K.A."/>
            <person name="Schlessinger D."/>
            <person name="Schueler M.G."/>
            <person name="Sehra H.K."/>
            <person name="Shaw-Smith C."/>
            <person name="Shen H."/>
            <person name="Sheridan E.M."/>
            <person name="Shownkeen R."/>
            <person name="Skuce C.D."/>
            <person name="Smith M.L."/>
            <person name="Sotheran E.C."/>
            <person name="Steingruber H.E."/>
            <person name="Steward C.A."/>
            <person name="Storey R."/>
            <person name="Swann R.M."/>
            <person name="Swarbreck D."/>
            <person name="Tabor P.E."/>
            <person name="Taudien S."/>
            <person name="Taylor T."/>
            <person name="Teague B."/>
            <person name="Thomas K."/>
            <person name="Thorpe A."/>
            <person name="Timms K."/>
            <person name="Tracey A."/>
            <person name="Trevanion S."/>
            <person name="Tromans A.C."/>
            <person name="d'Urso M."/>
            <person name="Verduzco D."/>
            <person name="Villasana D."/>
            <person name="Waldron L."/>
            <person name="Wall M."/>
            <person name="Wang Q."/>
            <person name="Warren J."/>
            <person name="Warry G.L."/>
            <person name="Wei X."/>
            <person name="West A."/>
            <person name="Whitehead S.L."/>
            <person name="Whiteley M.N."/>
            <person name="Wilkinson J.E."/>
            <person name="Willey D.L."/>
            <person name="Williams G."/>
            <person name="Williams L."/>
            <person name="Williamson A."/>
            <person name="Williamson H."/>
            <person name="Wilming L."/>
            <person name="Woodmansey R.L."/>
            <person name="Wray P.W."/>
            <person name="Yen J."/>
            <person name="Zhang J."/>
            <person name="Zhou J."/>
            <person name="Zoghbi H."/>
            <person name="Zorilla S."/>
            <person name="Buck D."/>
            <person name="Reinhardt R."/>
            <person name="Poustka A."/>
            <person name="Rosenthal A."/>
            <person name="Lehrach H."/>
            <person name="Meindl A."/>
            <person name="Minx P.J."/>
            <person name="Hillier L.W."/>
            <person name="Willard H.F."/>
            <person name="Wilson R.K."/>
            <person name="Waterston R.H."/>
            <person name="Rice C.M."/>
            <person name="Vaudin M."/>
            <person name="Coulson A."/>
            <person name="Nelson D.L."/>
            <person name="Weinstock G."/>
            <person name="Sulston J.E."/>
            <person name="Durbin R.M."/>
            <person name="Hubbard T."/>
            <person name="Gibbs R.A."/>
            <person name="Beck S."/>
            <person name="Rogers J."/>
            <person name="Bentley D.R."/>
        </authorList>
    </citation>
    <scope>NUCLEOTIDE SEQUENCE [LARGE SCALE GENOMIC DNA]</scope>
</reference>
<reference key="4">
    <citation type="journal article" date="2008" name="Biochem. Biophys. Res. Commun.">
        <title>CRIPTO3, a presumed pseudogene, is expressed in cancer.</title>
        <authorList>
            <person name="Sun C."/>
            <person name="Orozco O."/>
            <person name="Olson D.L."/>
            <person name="Choi E."/>
            <person name="Garber E."/>
            <person name="Tizard R."/>
            <person name="Szak S."/>
            <person name="Sanicola M."/>
            <person name="Carulli J.P."/>
        </authorList>
    </citation>
    <scope>FUNCTION</scope>
    <scope>SUBCELLULAR LOCATION</scope>
    <scope>TISSUE SPECIFICITY</scope>
</reference>